<organism>
    <name type="scientific">Equus caballus</name>
    <name type="common">Horse</name>
    <dbReference type="NCBI Taxonomy" id="9796"/>
    <lineage>
        <taxon>Eukaryota</taxon>
        <taxon>Metazoa</taxon>
        <taxon>Chordata</taxon>
        <taxon>Craniata</taxon>
        <taxon>Vertebrata</taxon>
        <taxon>Euteleostomi</taxon>
        <taxon>Mammalia</taxon>
        <taxon>Eutheria</taxon>
        <taxon>Laurasiatheria</taxon>
        <taxon>Perissodactyla</taxon>
        <taxon>Equidae</taxon>
        <taxon>Equus</taxon>
    </lineage>
</organism>
<dbReference type="EMBL" id="X74503">
    <property type="protein sequence ID" value="CAA52611.1"/>
    <property type="molecule type" value="mRNA"/>
</dbReference>
<dbReference type="PIR" id="A03164">
    <property type="entry name" value="XLHOA"/>
</dbReference>
<dbReference type="SMR" id="P02704"/>
<dbReference type="FunCoup" id="P02704">
    <property type="interactions" value="51"/>
</dbReference>
<dbReference type="InParanoid" id="P02704"/>
<dbReference type="Proteomes" id="UP000002281">
    <property type="component" value="Unplaced"/>
</dbReference>
<dbReference type="GO" id="GO:0005576">
    <property type="term" value="C:extracellular region"/>
    <property type="evidence" value="ECO:0007669"/>
    <property type="project" value="UniProtKB-SubCell"/>
</dbReference>
<dbReference type="GO" id="GO:0008047">
    <property type="term" value="F:enzyme activator activity"/>
    <property type="evidence" value="ECO:0007669"/>
    <property type="project" value="InterPro"/>
</dbReference>
<dbReference type="GO" id="GO:0035473">
    <property type="term" value="F:lipase binding"/>
    <property type="evidence" value="ECO:0007669"/>
    <property type="project" value="InterPro"/>
</dbReference>
<dbReference type="GO" id="GO:0007586">
    <property type="term" value="P:digestion"/>
    <property type="evidence" value="ECO:0007669"/>
    <property type="project" value="UniProtKB-KW"/>
</dbReference>
<dbReference type="GO" id="GO:0016042">
    <property type="term" value="P:lipid catabolic process"/>
    <property type="evidence" value="ECO:0007669"/>
    <property type="project" value="UniProtKB-KW"/>
</dbReference>
<dbReference type="GO" id="GO:0032094">
    <property type="term" value="P:response to food"/>
    <property type="evidence" value="ECO:0000318"/>
    <property type="project" value="GO_Central"/>
</dbReference>
<dbReference type="CDD" id="cd23011">
    <property type="entry name" value="CLPS"/>
    <property type="match status" value="1"/>
</dbReference>
<dbReference type="FunFam" id="2.10.80.10:FF:000005">
    <property type="entry name" value="Colipase"/>
    <property type="match status" value="1"/>
</dbReference>
<dbReference type="Gene3D" id="2.10.80.10">
    <property type="entry name" value="Lipase, subunit A"/>
    <property type="match status" value="1"/>
</dbReference>
<dbReference type="InterPro" id="IPR047576">
    <property type="entry name" value="CLPS_chr"/>
</dbReference>
<dbReference type="InterPro" id="IPR001981">
    <property type="entry name" value="Colipase"/>
</dbReference>
<dbReference type="InterPro" id="IPR017914">
    <property type="entry name" value="Colipase_C"/>
</dbReference>
<dbReference type="InterPro" id="IPR017915">
    <property type="entry name" value="Colipase_CS"/>
</dbReference>
<dbReference type="InterPro" id="IPR017913">
    <property type="entry name" value="Colipase_N"/>
</dbReference>
<dbReference type="PANTHER" id="PTHR10041">
    <property type="entry name" value="COLIPASE"/>
    <property type="match status" value="1"/>
</dbReference>
<dbReference type="PANTHER" id="PTHR10041:SF8">
    <property type="entry name" value="COLIPASE"/>
    <property type="match status" value="1"/>
</dbReference>
<dbReference type="Pfam" id="PF01114">
    <property type="entry name" value="Colipase"/>
    <property type="match status" value="1"/>
</dbReference>
<dbReference type="Pfam" id="PF02740">
    <property type="entry name" value="Colipase_C"/>
    <property type="match status" value="1"/>
</dbReference>
<dbReference type="PRINTS" id="PR00128">
    <property type="entry name" value="COLIPASE"/>
</dbReference>
<dbReference type="SMART" id="SM00023">
    <property type="entry name" value="COLIPASE"/>
    <property type="match status" value="1"/>
</dbReference>
<dbReference type="SUPFAM" id="SSF57190">
    <property type="entry name" value="Colipase-like"/>
    <property type="match status" value="2"/>
</dbReference>
<dbReference type="PROSITE" id="PS00121">
    <property type="entry name" value="COLIPASE_1"/>
    <property type="match status" value="1"/>
</dbReference>
<dbReference type="PROSITE" id="PS51342">
    <property type="entry name" value="COLIPASE_2"/>
    <property type="match status" value="1"/>
</dbReference>
<keyword id="KW-0222">Digestion</keyword>
<keyword id="KW-0903">Direct protein sequencing</keyword>
<keyword id="KW-1015">Disulfide bond</keyword>
<keyword id="KW-0442">Lipid degradation</keyword>
<keyword id="KW-0443">Lipid metabolism</keyword>
<keyword id="KW-1185">Reference proteome</keyword>
<keyword id="KW-0964">Secreted</keyword>
<keyword id="KW-0732">Signal</keyword>
<proteinExistence type="evidence at protein level"/>
<feature type="signal peptide" evidence="2 3 4">
    <location>
        <begin position="1" status="less than"/>
        <end position="11"/>
    </location>
</feature>
<feature type="propeptide" id="PRO_0000005692" description="Enterostatin, activation peptide">
    <location>
        <begin position="12"/>
        <end position="16"/>
    </location>
</feature>
<feature type="chain" id="PRO_0000005693" description="Colipase A">
    <location>
        <begin position="17"/>
        <end position="106"/>
    </location>
</feature>
<feature type="binding site" evidence="6">
    <location>
        <position position="63"/>
    </location>
    <ligand>
        <name>taurodeoxycholate</name>
        <dbReference type="ChEBI" id="CHEBI:36261"/>
    </ligand>
</feature>
<feature type="disulfide bond" evidence="1">
    <location>
        <begin position="28"/>
        <end position="39"/>
    </location>
</feature>
<feature type="disulfide bond" evidence="1">
    <location>
        <begin position="34"/>
        <end position="50"/>
    </location>
</feature>
<feature type="disulfide bond" evidence="1">
    <location>
        <begin position="38"/>
        <end position="72"/>
    </location>
</feature>
<feature type="disulfide bond" evidence="1">
    <location>
        <begin position="60"/>
        <end position="80"/>
    </location>
</feature>
<feature type="disulfide bond" evidence="1">
    <location>
        <begin position="74"/>
        <end position="98"/>
    </location>
</feature>
<feature type="sequence conflict" description="In Ref. 2; AA sequence and 3; AA sequence." evidence="5" ref="2 3">
    <original>Q</original>
    <variation>E</variation>
    <location>
        <position position="33"/>
    </location>
</feature>
<feature type="sequence conflict" description="In Ref. 2; AA sequence, 3; AA sequence and 4; AA sequence." evidence="5" ref="2 3 4">
    <original>S</original>
    <variation>E</variation>
    <location>
        <position position="43"/>
    </location>
</feature>
<feature type="sequence conflict" description="In Ref. 3; AA sequence." evidence="5" ref="3">
    <original>D</original>
    <variation>N</variation>
    <location>
        <position position="100"/>
    </location>
</feature>
<feature type="sequence conflict" description="In Ref. 3; AA sequence." evidence="5" ref="3">
    <original>R</original>
    <variation>K</variation>
    <location>
        <position position="103"/>
    </location>
</feature>
<feature type="sequence conflict" description="In Ref. 3; AA sequence." evidence="5" ref="3">
    <original>E</original>
    <variation>ER</variation>
    <location>
        <position position="106"/>
    </location>
</feature>
<feature type="non-terminal residue">
    <location>
        <position position="1"/>
    </location>
</feature>
<evidence type="ECO:0000255" key="1">
    <source>
        <dbReference type="PROSITE-ProRule" id="PRU00674"/>
    </source>
</evidence>
<evidence type="ECO:0000269" key="2">
    <source>
    </source>
</evidence>
<evidence type="ECO:0000269" key="3">
    <source>
    </source>
</evidence>
<evidence type="ECO:0000269" key="4">
    <source>
    </source>
</evidence>
<evidence type="ECO:0000305" key="5"/>
<evidence type="ECO:0000305" key="6">
    <source>
    </source>
</evidence>
<name>COLA_HORSE</name>
<reference key="1">
    <citation type="journal article" date="1994" name="Biochim. Biophys. Acta">
        <title>Molecular cloning and expression of two horse pancreatic cDNA encoding colipase A and B.</title>
        <authorList>
            <person name="Crenon I."/>
            <person name="Granon S."/>
            <person name="Chapus C."/>
            <person name="Kerfelec B."/>
        </authorList>
    </citation>
    <scope>NUCLEOTIDE SEQUENCE [MRNA]</scope>
    <source>
        <tissue>Pancreas</tissue>
    </source>
</reference>
<reference key="2">
    <citation type="journal article" date="1984" name="Biochim. Biophys. Acta">
        <title>The primary sequence of human pancreatic colipase.</title>
        <authorList>
            <person name="Sternby B."/>
            <person name="Engstroem A."/>
            <person name="Hellman U."/>
            <person name="Vihert A.M."/>
            <person name="Sternby N.-H."/>
            <person name="Borgstroem B."/>
        </authorList>
    </citation>
    <scope>PROTEIN SEQUENCE OF 12-106</scope>
    <source>
        <tissue>Pancreas</tissue>
    </source>
</reference>
<reference key="3">
    <citation type="journal article" date="1982" name="Eur. J. Biochem.">
        <title>Pancreatic colipase: crystallographic and biochemical aspects.</title>
        <authorList>
            <person name="Pierrot M."/>
            <person name="Astier J.-P."/>
            <person name="Astier M."/>
            <person name="Charles M."/>
            <person name="Drenth J."/>
        </authorList>
    </citation>
    <scope>PROTEIN SEQUENCE OF 12-106</scope>
    <scope>TAURODEOXYCHOLATE-BINDING</scope>
</reference>
<reference key="4">
    <citation type="journal article" date="1980" name="Biochem. Biophys. Res. Commun.">
        <title>Evidence for the existence of two isocolipases in horse pancreas.</title>
        <authorList>
            <person name="Julien R."/>
            <person name="Bechis G."/>
            <person name="Gregoire J."/>
            <person name="Rathelot J."/>
            <person name="Rochat H."/>
            <person name="Sarda L."/>
        </authorList>
    </citation>
    <scope>PROTEIN SEQUENCE OF 12-66</scope>
</reference>
<accession>P02704</accession>
<gene>
    <name type="primary">CLPS1</name>
</gene>
<sequence length="106" mass="11388">LLLVALAVAYAVPDPRGVIINLEAGEICLNSAQCKSECCHQESSLSLARCAAKASENSECSAWTLYGVYYKCPCERGLTCQVDKTLVGSIMNTNFGICFDAARSEE</sequence>
<comment type="function">
    <text>Colipase is a cofactor of pancreatic lipase. It allows the lipase to anchor itself to the lipid-water interface. Without colipase the enzyme is washed off by bile salts, which have an inhibitory effect on the lipase.</text>
</comment>
<comment type="function">
    <text>Enterostatin has a biological activity as a satiety signal.</text>
</comment>
<comment type="subunit">
    <text>Forms a 1:1 stoichiometric complex with pancreatic lipase.</text>
</comment>
<comment type="subcellular location">
    <subcellularLocation>
        <location>Secreted</location>
    </subcellularLocation>
</comment>
<comment type="tissue specificity">
    <text>Expressed by the pancreas.</text>
</comment>
<comment type="similarity">
    <text evidence="1">Belongs to the colipase family.</text>
</comment>
<protein>
    <recommendedName>
        <fullName>Colipase A</fullName>
    </recommendedName>
</protein>